<feature type="chain" id="PRO_0000174959" description="Thymidine kinase">
    <location>
        <begin position="1"/>
        <end position="204"/>
    </location>
</feature>
<feature type="active site" description="Proton acceptor" evidence="1">
    <location>
        <position position="89"/>
    </location>
</feature>
<feature type="binding site" evidence="1">
    <location>
        <begin position="15"/>
        <end position="22"/>
    </location>
    <ligand>
        <name>ATP</name>
        <dbReference type="ChEBI" id="CHEBI:30616"/>
    </ligand>
</feature>
<feature type="binding site" evidence="1">
    <location>
        <begin position="88"/>
        <end position="91"/>
    </location>
    <ligand>
        <name>ATP</name>
        <dbReference type="ChEBI" id="CHEBI:30616"/>
    </ligand>
</feature>
<feature type="binding site" evidence="1">
    <location>
        <position position="145"/>
    </location>
    <ligand>
        <name>Zn(2+)</name>
        <dbReference type="ChEBI" id="CHEBI:29105"/>
    </ligand>
</feature>
<feature type="binding site" evidence="1">
    <location>
        <position position="148"/>
    </location>
    <ligand>
        <name>Zn(2+)</name>
        <dbReference type="ChEBI" id="CHEBI:29105"/>
    </ligand>
</feature>
<feature type="binding site" evidence="1">
    <location>
        <position position="183"/>
    </location>
    <ligand>
        <name>Zn(2+)</name>
        <dbReference type="ChEBI" id="CHEBI:29105"/>
    </ligand>
</feature>
<feature type="binding site" evidence="1">
    <location>
        <position position="186"/>
    </location>
    <ligand>
        <name>Zn(2+)</name>
        <dbReference type="ChEBI" id="CHEBI:29105"/>
    </ligand>
</feature>
<proteinExistence type="inferred from homology"/>
<keyword id="KW-0067">ATP-binding</keyword>
<keyword id="KW-0963">Cytoplasm</keyword>
<keyword id="KW-0237">DNA synthesis</keyword>
<keyword id="KW-0418">Kinase</keyword>
<keyword id="KW-0479">Metal-binding</keyword>
<keyword id="KW-0547">Nucleotide-binding</keyword>
<keyword id="KW-1185">Reference proteome</keyword>
<keyword id="KW-0808">Transferase</keyword>
<keyword id="KW-0862">Zinc</keyword>
<gene>
    <name evidence="1" type="primary">tdk</name>
    <name type="ordered locus">BH3779</name>
</gene>
<sequence length="204" mass="22840">MQMIHKEGWIEVICGSMFSGKSEELIRRVRRATYGRLKVQVFKPAIDNRYSEQEVVSHNGNKVCAIPVERAMSILEQWSEDTDIVAIDEVQFFDEDVIGVVDYLADHGVRVICAGLDQDFRGEPFEPTRTLMAMAEYVTKLQAICPVCGSPASRTQRLIDGKPASYHDPIILVGAAEAYEPRCRHCHQVTNKPSKLPETASSGE</sequence>
<reference key="1">
    <citation type="journal article" date="2000" name="Nucleic Acids Res.">
        <title>Complete genome sequence of the alkaliphilic bacterium Bacillus halodurans and genomic sequence comparison with Bacillus subtilis.</title>
        <authorList>
            <person name="Takami H."/>
            <person name="Nakasone K."/>
            <person name="Takaki Y."/>
            <person name="Maeno G."/>
            <person name="Sasaki R."/>
            <person name="Masui N."/>
            <person name="Fuji F."/>
            <person name="Hirama C."/>
            <person name="Nakamura Y."/>
            <person name="Ogasawara N."/>
            <person name="Kuhara S."/>
            <person name="Horikoshi K."/>
        </authorList>
    </citation>
    <scope>NUCLEOTIDE SEQUENCE [LARGE SCALE GENOMIC DNA]</scope>
    <source>
        <strain>ATCC BAA-125 / DSM 18197 / FERM 7344 / JCM 9153 / C-125</strain>
    </source>
</reference>
<name>KITH_HALH5</name>
<organism>
    <name type="scientific">Halalkalibacterium halodurans (strain ATCC BAA-125 / DSM 18197 / FERM 7344 / JCM 9153 / C-125)</name>
    <name type="common">Bacillus halodurans</name>
    <dbReference type="NCBI Taxonomy" id="272558"/>
    <lineage>
        <taxon>Bacteria</taxon>
        <taxon>Bacillati</taxon>
        <taxon>Bacillota</taxon>
        <taxon>Bacilli</taxon>
        <taxon>Bacillales</taxon>
        <taxon>Bacillaceae</taxon>
        <taxon>Halalkalibacterium (ex Joshi et al. 2022)</taxon>
    </lineage>
</organism>
<dbReference type="EC" id="2.7.1.21" evidence="1"/>
<dbReference type="EMBL" id="BA000004">
    <property type="protein sequence ID" value="BAB07498.1"/>
    <property type="molecule type" value="Genomic_DNA"/>
</dbReference>
<dbReference type="PIR" id="C84122">
    <property type="entry name" value="C84122"/>
</dbReference>
<dbReference type="RefSeq" id="WP_010899904.1">
    <property type="nucleotide sequence ID" value="NC_002570.2"/>
</dbReference>
<dbReference type="SMR" id="Q9K6F0"/>
<dbReference type="STRING" id="272558.gene:10729692"/>
<dbReference type="GeneID" id="87599325"/>
<dbReference type="KEGG" id="bha:BH3779"/>
<dbReference type="eggNOG" id="COG1435">
    <property type="taxonomic scope" value="Bacteria"/>
</dbReference>
<dbReference type="HOGENOM" id="CLU_064400_3_0_9"/>
<dbReference type="OrthoDB" id="9781579at2"/>
<dbReference type="Proteomes" id="UP000001258">
    <property type="component" value="Chromosome"/>
</dbReference>
<dbReference type="GO" id="GO:0005829">
    <property type="term" value="C:cytosol"/>
    <property type="evidence" value="ECO:0007669"/>
    <property type="project" value="TreeGrafter"/>
</dbReference>
<dbReference type="GO" id="GO:0005524">
    <property type="term" value="F:ATP binding"/>
    <property type="evidence" value="ECO:0007669"/>
    <property type="project" value="UniProtKB-UniRule"/>
</dbReference>
<dbReference type="GO" id="GO:0004797">
    <property type="term" value="F:thymidine kinase activity"/>
    <property type="evidence" value="ECO:0007669"/>
    <property type="project" value="UniProtKB-UniRule"/>
</dbReference>
<dbReference type="GO" id="GO:0008270">
    <property type="term" value="F:zinc ion binding"/>
    <property type="evidence" value="ECO:0007669"/>
    <property type="project" value="UniProtKB-UniRule"/>
</dbReference>
<dbReference type="GO" id="GO:0071897">
    <property type="term" value="P:DNA biosynthetic process"/>
    <property type="evidence" value="ECO:0007669"/>
    <property type="project" value="UniProtKB-KW"/>
</dbReference>
<dbReference type="GO" id="GO:0046104">
    <property type="term" value="P:thymidine metabolic process"/>
    <property type="evidence" value="ECO:0007669"/>
    <property type="project" value="TreeGrafter"/>
</dbReference>
<dbReference type="FunFam" id="3.30.60.20:FF:000026">
    <property type="entry name" value="Thymidine kinase"/>
    <property type="match status" value="1"/>
</dbReference>
<dbReference type="FunFam" id="3.40.50.300:FF:000384">
    <property type="entry name" value="Thymidine kinase"/>
    <property type="match status" value="1"/>
</dbReference>
<dbReference type="Gene3D" id="3.30.60.20">
    <property type="match status" value="1"/>
</dbReference>
<dbReference type="Gene3D" id="3.40.50.300">
    <property type="entry name" value="P-loop containing nucleotide triphosphate hydrolases"/>
    <property type="match status" value="1"/>
</dbReference>
<dbReference type="HAMAP" id="MF_00124">
    <property type="entry name" value="Thymidine_kinase"/>
    <property type="match status" value="1"/>
</dbReference>
<dbReference type="InterPro" id="IPR027417">
    <property type="entry name" value="P-loop_NTPase"/>
</dbReference>
<dbReference type="InterPro" id="IPR001267">
    <property type="entry name" value="Thymidine_kinase"/>
</dbReference>
<dbReference type="InterPro" id="IPR020633">
    <property type="entry name" value="Thymidine_kinase_CS"/>
</dbReference>
<dbReference type="NCBIfam" id="NF003296">
    <property type="entry name" value="PRK04296.1-1"/>
    <property type="match status" value="1"/>
</dbReference>
<dbReference type="PANTHER" id="PTHR11441">
    <property type="entry name" value="THYMIDINE KINASE"/>
    <property type="match status" value="1"/>
</dbReference>
<dbReference type="PANTHER" id="PTHR11441:SF0">
    <property type="entry name" value="THYMIDINE KINASE, CYTOSOLIC"/>
    <property type="match status" value="1"/>
</dbReference>
<dbReference type="Pfam" id="PF00265">
    <property type="entry name" value="TK"/>
    <property type="match status" value="1"/>
</dbReference>
<dbReference type="PIRSF" id="PIRSF035805">
    <property type="entry name" value="TK_cell"/>
    <property type="match status" value="1"/>
</dbReference>
<dbReference type="SUPFAM" id="SSF57716">
    <property type="entry name" value="Glucocorticoid receptor-like (DNA-binding domain)"/>
    <property type="match status" value="1"/>
</dbReference>
<dbReference type="SUPFAM" id="SSF52540">
    <property type="entry name" value="P-loop containing nucleoside triphosphate hydrolases"/>
    <property type="match status" value="1"/>
</dbReference>
<dbReference type="PROSITE" id="PS00603">
    <property type="entry name" value="TK_CELLULAR_TYPE"/>
    <property type="match status" value="1"/>
</dbReference>
<protein>
    <recommendedName>
        <fullName evidence="1">Thymidine kinase</fullName>
        <ecNumber evidence="1">2.7.1.21</ecNumber>
    </recommendedName>
</protein>
<comment type="catalytic activity">
    <reaction evidence="1">
        <text>thymidine + ATP = dTMP + ADP + H(+)</text>
        <dbReference type="Rhea" id="RHEA:19129"/>
        <dbReference type="ChEBI" id="CHEBI:15378"/>
        <dbReference type="ChEBI" id="CHEBI:17748"/>
        <dbReference type="ChEBI" id="CHEBI:30616"/>
        <dbReference type="ChEBI" id="CHEBI:63528"/>
        <dbReference type="ChEBI" id="CHEBI:456216"/>
        <dbReference type="EC" id="2.7.1.21"/>
    </reaction>
</comment>
<comment type="subunit">
    <text evidence="1">Homotetramer.</text>
</comment>
<comment type="subcellular location">
    <subcellularLocation>
        <location evidence="1">Cytoplasm</location>
    </subcellularLocation>
</comment>
<comment type="similarity">
    <text evidence="1">Belongs to the thymidine kinase family.</text>
</comment>
<accession>Q9K6F0</accession>
<evidence type="ECO:0000255" key="1">
    <source>
        <dbReference type="HAMAP-Rule" id="MF_00124"/>
    </source>
</evidence>